<accession>Q6FJ81</accession>
<organism>
    <name type="scientific">Candida glabrata (strain ATCC 2001 / BCRC 20586 / JCM 3761 / NBRC 0622 / NRRL Y-65 / CBS 138)</name>
    <name type="common">Yeast</name>
    <name type="synonym">Nakaseomyces glabratus</name>
    <dbReference type="NCBI Taxonomy" id="284593"/>
    <lineage>
        <taxon>Eukaryota</taxon>
        <taxon>Fungi</taxon>
        <taxon>Dikarya</taxon>
        <taxon>Ascomycota</taxon>
        <taxon>Saccharomycotina</taxon>
        <taxon>Saccharomycetes</taxon>
        <taxon>Saccharomycetales</taxon>
        <taxon>Saccharomycetaceae</taxon>
        <taxon>Nakaseomyces</taxon>
    </lineage>
</organism>
<evidence type="ECO:0000250" key="1"/>
<evidence type="ECO:0000255" key="2"/>
<evidence type="ECO:0000305" key="3"/>
<protein>
    <recommendedName>
        <fullName>GPI ethanolamine phosphate transferase 1</fullName>
        <ecNumber>2.-.-.-</ecNumber>
    </recommendedName>
</protein>
<reference key="1">
    <citation type="journal article" date="2004" name="Nature">
        <title>Genome evolution in yeasts.</title>
        <authorList>
            <person name="Dujon B."/>
            <person name="Sherman D."/>
            <person name="Fischer G."/>
            <person name="Durrens P."/>
            <person name="Casaregola S."/>
            <person name="Lafontaine I."/>
            <person name="de Montigny J."/>
            <person name="Marck C."/>
            <person name="Neuveglise C."/>
            <person name="Talla E."/>
            <person name="Goffard N."/>
            <person name="Frangeul L."/>
            <person name="Aigle M."/>
            <person name="Anthouard V."/>
            <person name="Babour A."/>
            <person name="Barbe V."/>
            <person name="Barnay S."/>
            <person name="Blanchin S."/>
            <person name="Beckerich J.-M."/>
            <person name="Beyne E."/>
            <person name="Bleykasten C."/>
            <person name="Boisrame A."/>
            <person name="Boyer J."/>
            <person name="Cattolico L."/>
            <person name="Confanioleri F."/>
            <person name="de Daruvar A."/>
            <person name="Despons L."/>
            <person name="Fabre E."/>
            <person name="Fairhead C."/>
            <person name="Ferry-Dumazet H."/>
            <person name="Groppi A."/>
            <person name="Hantraye F."/>
            <person name="Hennequin C."/>
            <person name="Jauniaux N."/>
            <person name="Joyet P."/>
            <person name="Kachouri R."/>
            <person name="Kerrest A."/>
            <person name="Koszul R."/>
            <person name="Lemaire M."/>
            <person name="Lesur I."/>
            <person name="Ma L."/>
            <person name="Muller H."/>
            <person name="Nicaud J.-M."/>
            <person name="Nikolski M."/>
            <person name="Oztas S."/>
            <person name="Ozier-Kalogeropoulos O."/>
            <person name="Pellenz S."/>
            <person name="Potier S."/>
            <person name="Richard G.-F."/>
            <person name="Straub M.-L."/>
            <person name="Suleau A."/>
            <person name="Swennen D."/>
            <person name="Tekaia F."/>
            <person name="Wesolowski-Louvel M."/>
            <person name="Westhof E."/>
            <person name="Wirth B."/>
            <person name="Zeniou-Meyer M."/>
            <person name="Zivanovic Y."/>
            <person name="Bolotin-Fukuhara M."/>
            <person name="Thierry A."/>
            <person name="Bouchier C."/>
            <person name="Caudron B."/>
            <person name="Scarpelli C."/>
            <person name="Gaillardin C."/>
            <person name="Weissenbach J."/>
            <person name="Wincker P."/>
            <person name="Souciet J.-L."/>
        </authorList>
    </citation>
    <scope>NUCLEOTIDE SEQUENCE [LARGE SCALE GENOMIC DNA]</scope>
    <source>
        <strain>ATCC 2001 / BCRC 20586 / JCM 3761 / NBRC 0622 / NRRL Y-65 / CBS 138</strain>
    </source>
</reference>
<keyword id="KW-0961">Cell wall biogenesis/degradation</keyword>
<keyword id="KW-0256">Endoplasmic reticulum</keyword>
<keyword id="KW-0325">Glycoprotein</keyword>
<keyword id="KW-0337">GPI-anchor biosynthesis</keyword>
<keyword id="KW-0472">Membrane</keyword>
<keyword id="KW-1185">Reference proteome</keyword>
<keyword id="KW-0808">Transferase</keyword>
<keyword id="KW-0812">Transmembrane</keyword>
<keyword id="KW-1133">Transmembrane helix</keyword>
<name>MCD4_CANGA</name>
<feature type="chain" id="PRO_0000246204" description="GPI ethanolamine phosphate transferase 1">
    <location>
        <begin position="1"/>
        <end position="921"/>
    </location>
</feature>
<feature type="topological domain" description="Cytoplasmic" evidence="2">
    <location>
        <begin position="1"/>
        <end position="9"/>
    </location>
</feature>
<feature type="transmembrane region" description="Helical" evidence="2">
    <location>
        <begin position="10"/>
        <end position="30"/>
    </location>
</feature>
<feature type="topological domain" description="Lumenal" evidence="2">
    <location>
        <begin position="31"/>
        <end position="457"/>
    </location>
</feature>
<feature type="transmembrane region" description="Helical" evidence="2">
    <location>
        <begin position="458"/>
        <end position="478"/>
    </location>
</feature>
<feature type="topological domain" description="Cytoplasmic" evidence="2">
    <location>
        <begin position="479"/>
        <end position="488"/>
    </location>
</feature>
<feature type="transmembrane region" description="Helical" evidence="2">
    <location>
        <begin position="489"/>
        <end position="509"/>
    </location>
</feature>
<feature type="topological domain" description="Lumenal" evidence="2">
    <location>
        <begin position="510"/>
        <end position="516"/>
    </location>
</feature>
<feature type="transmembrane region" description="Helical" evidence="2">
    <location>
        <begin position="517"/>
        <end position="537"/>
    </location>
</feature>
<feature type="topological domain" description="Cytoplasmic" evidence="2">
    <location>
        <begin position="538"/>
        <end position="552"/>
    </location>
</feature>
<feature type="transmembrane region" description="Helical" evidence="2">
    <location>
        <begin position="553"/>
        <end position="573"/>
    </location>
</feature>
<feature type="topological domain" description="Lumenal" evidence="2">
    <location>
        <begin position="574"/>
        <end position="575"/>
    </location>
</feature>
<feature type="transmembrane region" description="Helical" evidence="2">
    <location>
        <begin position="576"/>
        <end position="596"/>
    </location>
</feature>
<feature type="topological domain" description="Cytoplasmic" evidence="2">
    <location>
        <begin position="597"/>
        <end position="599"/>
    </location>
</feature>
<feature type="transmembrane region" description="Helical" evidence="2">
    <location>
        <begin position="600"/>
        <end position="620"/>
    </location>
</feature>
<feature type="topological domain" description="Lumenal" evidence="2">
    <location>
        <position position="621"/>
    </location>
</feature>
<feature type="transmembrane region" description="Helical" evidence="2">
    <location>
        <begin position="622"/>
        <end position="642"/>
    </location>
</feature>
<feature type="topological domain" description="Cytoplasmic" evidence="2">
    <location>
        <begin position="643"/>
        <end position="654"/>
    </location>
</feature>
<feature type="transmembrane region" description="Helical" evidence="2">
    <location>
        <begin position="655"/>
        <end position="675"/>
    </location>
</feature>
<feature type="topological domain" description="Lumenal" evidence="2">
    <location>
        <begin position="676"/>
        <end position="684"/>
    </location>
</feature>
<feature type="transmembrane region" description="Helical" evidence="2">
    <location>
        <begin position="685"/>
        <end position="705"/>
    </location>
</feature>
<feature type="topological domain" description="Cytoplasmic" evidence="2">
    <location>
        <begin position="706"/>
        <end position="728"/>
    </location>
</feature>
<feature type="transmembrane region" description="Helical" evidence="2">
    <location>
        <begin position="729"/>
        <end position="749"/>
    </location>
</feature>
<feature type="topological domain" description="Lumenal" evidence="2">
    <location>
        <begin position="750"/>
        <end position="777"/>
    </location>
</feature>
<feature type="transmembrane region" description="Helical" evidence="2">
    <location>
        <begin position="778"/>
        <end position="798"/>
    </location>
</feature>
<feature type="topological domain" description="Cytoplasmic" evidence="2">
    <location>
        <begin position="799"/>
        <end position="819"/>
    </location>
</feature>
<feature type="transmembrane region" description="Helical" evidence="2">
    <location>
        <begin position="820"/>
        <end position="840"/>
    </location>
</feature>
<feature type="topological domain" description="Lumenal" evidence="2">
    <location>
        <begin position="841"/>
        <end position="849"/>
    </location>
</feature>
<feature type="transmembrane region" description="Helical" evidence="2">
    <location>
        <begin position="850"/>
        <end position="870"/>
    </location>
</feature>
<feature type="topological domain" description="Cytoplasmic" evidence="2">
    <location>
        <begin position="871"/>
        <end position="878"/>
    </location>
</feature>
<feature type="transmembrane region" description="Helical" evidence="2">
    <location>
        <begin position="879"/>
        <end position="899"/>
    </location>
</feature>
<feature type="topological domain" description="Lumenal" evidence="2">
    <location>
        <begin position="900"/>
        <end position="921"/>
    </location>
</feature>
<feature type="glycosylation site" description="N-linked (GlcNAc...) asparagine" evidence="2">
    <location>
        <position position="90"/>
    </location>
</feature>
<feature type="glycosylation site" description="N-linked (GlcNAc...) asparagine" evidence="2">
    <location>
        <position position="138"/>
    </location>
</feature>
<feature type="glycosylation site" description="N-linked (GlcNAc...) asparagine" evidence="2">
    <location>
        <position position="198"/>
    </location>
</feature>
<feature type="glycosylation site" description="N-linked (GlcNAc...) asparagine" evidence="2">
    <location>
        <position position="262"/>
    </location>
</feature>
<feature type="glycosylation site" description="N-linked (GlcNAc...) asparagine" evidence="2">
    <location>
        <position position="286"/>
    </location>
</feature>
<feature type="glycosylation site" description="N-linked (GlcNAc...) asparagine" evidence="2">
    <location>
        <position position="909"/>
    </location>
</feature>
<gene>
    <name type="primary">MCD4</name>
    <name type="ordered locus">CAGL0M08448g</name>
</gene>
<proteinExistence type="inferred from homology"/>
<dbReference type="EC" id="2.-.-.-"/>
<dbReference type="EMBL" id="CR380959">
    <property type="protein sequence ID" value="CAG62689.1"/>
    <property type="molecule type" value="Genomic_DNA"/>
</dbReference>
<dbReference type="RefSeq" id="XP_449713.1">
    <property type="nucleotide sequence ID" value="XM_449713.1"/>
</dbReference>
<dbReference type="SMR" id="Q6FJ81"/>
<dbReference type="FunCoup" id="Q6FJ81">
    <property type="interactions" value="514"/>
</dbReference>
<dbReference type="STRING" id="284593.Q6FJ81"/>
<dbReference type="GlyCosmos" id="Q6FJ81">
    <property type="glycosylation" value="6 sites, No reported glycans"/>
</dbReference>
<dbReference type="EnsemblFungi" id="CAGL0M08448g-T">
    <property type="protein sequence ID" value="CAGL0M08448g-T-p1"/>
    <property type="gene ID" value="CAGL0M08448g"/>
</dbReference>
<dbReference type="KEGG" id="cgr:2891272"/>
<dbReference type="CGD" id="CAL0136323">
    <property type="gene designation" value="CAGL0M08448g"/>
</dbReference>
<dbReference type="VEuPathDB" id="FungiDB:CAGL0M08448g"/>
<dbReference type="eggNOG" id="KOG2124">
    <property type="taxonomic scope" value="Eukaryota"/>
</dbReference>
<dbReference type="HOGENOM" id="CLU_007676_0_0_1"/>
<dbReference type="InParanoid" id="Q6FJ81"/>
<dbReference type="OMA" id="QSYFHRE"/>
<dbReference type="UniPathway" id="UPA00196"/>
<dbReference type="Proteomes" id="UP000002428">
    <property type="component" value="Chromosome M"/>
</dbReference>
<dbReference type="GO" id="GO:0005789">
    <property type="term" value="C:endoplasmic reticulum membrane"/>
    <property type="evidence" value="ECO:0007669"/>
    <property type="project" value="UniProtKB-SubCell"/>
</dbReference>
<dbReference type="GO" id="GO:0009277">
    <property type="term" value="C:fungal-type cell wall"/>
    <property type="evidence" value="ECO:0007669"/>
    <property type="project" value="EnsemblFungi"/>
</dbReference>
<dbReference type="GO" id="GO:0000324">
    <property type="term" value="C:fungal-type vacuole"/>
    <property type="evidence" value="ECO:0007669"/>
    <property type="project" value="EnsemblFungi"/>
</dbReference>
<dbReference type="GO" id="GO:0051377">
    <property type="term" value="F:mannose-ethanolamine phosphotransferase activity"/>
    <property type="evidence" value="ECO:0007669"/>
    <property type="project" value="EnsemblFungi"/>
</dbReference>
<dbReference type="GO" id="GO:0015867">
    <property type="term" value="P:ATP transport"/>
    <property type="evidence" value="ECO:0007669"/>
    <property type="project" value="EnsemblFungi"/>
</dbReference>
<dbReference type="GO" id="GO:0071555">
    <property type="term" value="P:cell wall organization"/>
    <property type="evidence" value="ECO:0007669"/>
    <property type="project" value="UniProtKB-KW"/>
</dbReference>
<dbReference type="GO" id="GO:0006506">
    <property type="term" value="P:GPI anchor biosynthetic process"/>
    <property type="evidence" value="ECO:0007669"/>
    <property type="project" value="UniProtKB-UniPathway"/>
</dbReference>
<dbReference type="CDD" id="cd16020">
    <property type="entry name" value="GPI_EPT_1"/>
    <property type="match status" value="1"/>
</dbReference>
<dbReference type="FunFam" id="3.40.720.10:FF:000015">
    <property type="entry name" value="GPI ethanolamine phosphate transferase 1"/>
    <property type="match status" value="1"/>
</dbReference>
<dbReference type="Gene3D" id="3.40.720.10">
    <property type="entry name" value="Alkaline Phosphatase, subunit A"/>
    <property type="match status" value="1"/>
</dbReference>
<dbReference type="InterPro" id="IPR017850">
    <property type="entry name" value="Alkaline_phosphatase_core_sf"/>
</dbReference>
<dbReference type="InterPro" id="IPR007070">
    <property type="entry name" value="GPI_EtnP_transferase_1"/>
</dbReference>
<dbReference type="InterPro" id="IPR017852">
    <property type="entry name" value="GPI_EtnP_transferase_1_C"/>
</dbReference>
<dbReference type="InterPro" id="IPR002591">
    <property type="entry name" value="Phosphodiest/P_Trfase"/>
</dbReference>
<dbReference type="InterPro" id="IPR037671">
    <property type="entry name" value="PIGN_N"/>
</dbReference>
<dbReference type="PANTHER" id="PTHR12250:SF0">
    <property type="entry name" value="GPI ETHANOLAMINE PHOSPHATE TRANSFERASE 1"/>
    <property type="match status" value="1"/>
</dbReference>
<dbReference type="PANTHER" id="PTHR12250">
    <property type="entry name" value="PHOSPHATIDYLINOSITOL GLYCAN, CLASS N"/>
    <property type="match status" value="1"/>
</dbReference>
<dbReference type="Pfam" id="PF01663">
    <property type="entry name" value="Phosphodiest"/>
    <property type="match status" value="1"/>
</dbReference>
<dbReference type="Pfam" id="PF04987">
    <property type="entry name" value="PigN"/>
    <property type="match status" value="1"/>
</dbReference>
<dbReference type="SUPFAM" id="SSF53649">
    <property type="entry name" value="Alkaline phosphatase-like"/>
    <property type="match status" value="1"/>
</dbReference>
<comment type="function">
    <text evidence="1">Ethanolamine phosphate transferase involved in glycosylphosphatidylinositol-anchor biosynthesis. Transfers ethanolamine phosphate to the first alpha-1,4-linked mannose of the glycosylphosphatidylinositol precursor of GPI-anchor (By similarity).</text>
</comment>
<comment type="pathway">
    <text>Glycolipid biosynthesis; glycosylphosphatidylinositol-anchor biosynthesis.</text>
</comment>
<comment type="subcellular location">
    <subcellularLocation>
        <location evidence="1">Endoplasmic reticulum membrane</location>
        <topology evidence="1">Multi-pass membrane protein</topology>
    </subcellularLocation>
</comment>
<comment type="similarity">
    <text evidence="3">Belongs to the PIGG/PIGN/PIGO family. PIGN subfamily.</text>
</comment>
<sequence>MKNNTRFTLIVVGVLFHLLYLWSIFDIYFISPLVHGMEQKISTNNPPAKRLFLIVGDGLRADTTFDKITHPVTKKADYLAPFIRSLVQNNATYGISHTRMPTESRPGHVAMIAGFYEDVSAVTKGWKENPVDFDSFFNQTAHTYSFGSPDILPMFKDGASDPNKVDAWMYGHEYEDFTQSSIELDAYVFRHLDQLFKNSSTDKELDKQIRQDGNAFFLHLLGCDTAGHSYRPYSAEYYDNVIYIDKQVEKLVKQVEEFFGDNDTAFIFTADHGMSAFGSHGDGHPNNTRTPLVAWGAGLNRPVRLDTPEFDEYTENWNLANIKRNDVKQADIAALMSYLIGTNYPANSVGELPLAYIEGSEGQKLEALLNNAESILEQYRVKENEVINSQFVYKIYPKFAEKSPTEYLKEIKELIKKIENGEESLEPEAIRLTEELMKVTLEGLHYLTTYNWRFIRTIVTFGFLGWICYSFMIFLKLFILNNSQTTHPSILNISIFTSLGLILNYILFYQKSPLNFYLYLIFPLFFWSKIFSNTAIIRDGVNEFFKGISKAESVIIGLTIISIYEGIVYGFFHRWILSLILVSFAFYPLVCGVTDLFTNLLWILTSVGLSSFTLLDAVKIENLQQIQVAGILIVLSSAYAVMRLSQDISKYTQHLLSIQIFLVSGMLHFTSKSVISLQKREGLPAFAQVGGWAILVISLTIMPFLHYLKPNNNYQVRLLTIYLTFAPSFIILSISFEALFYFIFTAYIVQWLQIEKNIKVLKDEQKSDSNGIQLLRVAIIGFFLQQIAFFGTGNVASISSFSLDSVYRLLPVFDPFPMGALLMLKLIIPYVLLSCGLGIMNIQLDIKDYTISSLIISTSDILSLNFFYLLKTEGSWLDIGVTISNYCLAILSSLFMLILEIVGHQLLKNVTRATSSQKKTN</sequence>